<dbReference type="EC" id="7.1.1.8"/>
<dbReference type="EMBL" id="AK002815">
    <property type="protein sequence ID" value="BAB22380.1"/>
    <property type="molecule type" value="mRNA"/>
</dbReference>
<dbReference type="EMBL" id="AK011288">
    <property type="protein sequence ID" value="BAB27518.1"/>
    <property type="molecule type" value="mRNA"/>
</dbReference>
<dbReference type="EMBL" id="AK151299">
    <property type="protein sequence ID" value="BAE30282.1"/>
    <property type="molecule type" value="mRNA"/>
</dbReference>
<dbReference type="EMBL" id="AK170272">
    <property type="protein sequence ID" value="BAE41677.1"/>
    <property type="molecule type" value="mRNA"/>
</dbReference>
<dbReference type="EMBL" id="BC005620">
    <property type="protein sequence ID" value="AAH05620.1"/>
    <property type="molecule type" value="mRNA"/>
</dbReference>
<dbReference type="EMBL" id="BC082790">
    <property type="protein sequence ID" value="AAH82790.1"/>
    <property type="status" value="ALT_INIT"/>
    <property type="molecule type" value="mRNA"/>
</dbReference>
<dbReference type="CCDS" id="CCDS27567.1">
    <molecule id="Q9D0M3-1"/>
</dbReference>
<dbReference type="RefSeq" id="NP_079843.1">
    <molecule id="Q9D0M3-1"/>
    <property type="nucleotide sequence ID" value="NM_025567.3"/>
</dbReference>
<dbReference type="RefSeq" id="XP_030104554.1">
    <molecule id="Q9D0M3-2"/>
    <property type="nucleotide sequence ID" value="XM_030248694.2"/>
</dbReference>
<dbReference type="PDB" id="7O37">
    <property type="method" value="EM"/>
    <property type="resolution" value="3.20 A"/>
    <property type="chains" value="D/O=85-325"/>
</dbReference>
<dbReference type="PDB" id="7O3C">
    <property type="method" value="EM"/>
    <property type="resolution" value="3.30 A"/>
    <property type="chains" value="D/O=85-325"/>
</dbReference>
<dbReference type="PDB" id="7O3E">
    <property type="method" value="EM"/>
    <property type="resolution" value="3.60 A"/>
    <property type="chains" value="D/O=85-325"/>
</dbReference>
<dbReference type="PDB" id="7O3H">
    <property type="method" value="EM"/>
    <property type="resolution" value="2.60 A"/>
    <property type="chains" value="D/O=85-325"/>
</dbReference>
<dbReference type="PDB" id="8IAO">
    <property type="method" value="EM"/>
    <property type="resolution" value="4.20 A"/>
    <property type="chains" value="AD/Ad=1-325"/>
</dbReference>
<dbReference type="PDB" id="8IAR">
    <property type="method" value="EM"/>
    <property type="resolution" value="3.40 A"/>
    <property type="chains" value="AD/Ad=1-325"/>
</dbReference>
<dbReference type="PDB" id="8IB4">
    <property type="method" value="EM"/>
    <property type="resolution" value="4.30 A"/>
    <property type="chains" value="AD/Ad=1-325"/>
</dbReference>
<dbReference type="PDB" id="8IB7">
    <property type="method" value="EM"/>
    <property type="resolution" value="3.40 A"/>
    <property type="chains" value="AD/Ad=1-325"/>
</dbReference>
<dbReference type="PDB" id="8IB9">
    <property type="method" value="EM"/>
    <property type="resolution" value="4.30 A"/>
    <property type="chains" value="AD/Ad=1-325"/>
</dbReference>
<dbReference type="PDB" id="8IBC">
    <property type="method" value="EM"/>
    <property type="resolution" value="3.60 A"/>
    <property type="chains" value="AD/Ad=1-325"/>
</dbReference>
<dbReference type="PDB" id="8IBD">
    <property type="method" value="EM"/>
    <property type="resolution" value="4.20 A"/>
    <property type="chains" value="AD/Ad=1-325"/>
</dbReference>
<dbReference type="PDB" id="8IBG">
    <property type="method" value="EM"/>
    <property type="resolution" value="3.80 A"/>
    <property type="chains" value="AD/Ad=1-325"/>
</dbReference>
<dbReference type="PDB" id="8IC2">
    <property type="method" value="EM"/>
    <property type="resolution" value="6.30 A"/>
    <property type="chains" value="AD/Ad=1-325"/>
</dbReference>
<dbReference type="PDB" id="8IC5">
    <property type="method" value="EM"/>
    <property type="resolution" value="4.10 A"/>
    <property type="chains" value="AD/Ad=1-325"/>
</dbReference>
<dbReference type="PDB" id="8PW5">
    <property type="method" value="EM"/>
    <property type="resolution" value="3.60 A"/>
    <property type="chains" value="D/O=1-325"/>
</dbReference>
<dbReference type="PDB" id="8PW6">
    <property type="method" value="EM"/>
    <property type="resolution" value="3.30 A"/>
    <property type="chains" value="D/O=1-325"/>
</dbReference>
<dbReference type="PDB" id="8PW7">
    <property type="method" value="EM"/>
    <property type="resolution" value="3.50 A"/>
    <property type="chains" value="D/O=1-325"/>
</dbReference>
<dbReference type="PDB" id="8UCA">
    <property type="method" value="EM"/>
    <property type="resolution" value="3.70 A"/>
    <property type="chains" value="3D/3O=85-325"/>
</dbReference>
<dbReference type="PDBsum" id="7O37"/>
<dbReference type="PDBsum" id="7O3C"/>
<dbReference type="PDBsum" id="7O3E"/>
<dbReference type="PDBsum" id="7O3H"/>
<dbReference type="PDBsum" id="8IAO"/>
<dbReference type="PDBsum" id="8IAR"/>
<dbReference type="PDBsum" id="8IB4"/>
<dbReference type="PDBsum" id="8IB7"/>
<dbReference type="PDBsum" id="8IB9"/>
<dbReference type="PDBsum" id="8IBC"/>
<dbReference type="PDBsum" id="8IBD"/>
<dbReference type="PDBsum" id="8IBG"/>
<dbReference type="PDBsum" id="8IC2"/>
<dbReference type="PDBsum" id="8IC5"/>
<dbReference type="PDBsum" id="8PW5"/>
<dbReference type="PDBsum" id="8PW6"/>
<dbReference type="PDBsum" id="8PW7"/>
<dbReference type="PDBsum" id="8UCA"/>
<dbReference type="EMDB" id="EMD-12702"/>
<dbReference type="EMDB" id="EMD-12703"/>
<dbReference type="EMDB" id="EMD-12705"/>
<dbReference type="EMDB" id="EMD-12706"/>
<dbReference type="EMDB" id="EMD-17989"/>
<dbReference type="EMDB" id="EMD-17990"/>
<dbReference type="EMDB" id="EMD-17991"/>
<dbReference type="EMDB" id="EMD-35313"/>
<dbReference type="EMDB" id="EMD-35316"/>
<dbReference type="EMDB" id="EMD-35331"/>
<dbReference type="EMDB" id="EMD-35334"/>
<dbReference type="EMDB" id="EMD-35336"/>
<dbReference type="EMDB" id="EMD-35339"/>
<dbReference type="EMDB" id="EMD-35340"/>
<dbReference type="EMDB" id="EMD-35343"/>
<dbReference type="EMDB" id="EMD-35352"/>
<dbReference type="EMDB" id="EMD-35355"/>
<dbReference type="EMDB" id="EMD-42122"/>
<dbReference type="SMR" id="Q9D0M3"/>
<dbReference type="BioGRID" id="211479">
    <property type="interactions" value="87"/>
</dbReference>
<dbReference type="ComplexPortal" id="CPX-563">
    <property type="entry name" value="Mitochondrial respiratory chain complex III"/>
</dbReference>
<dbReference type="CORUM" id="Q9D0M3"/>
<dbReference type="FunCoup" id="Q9D0M3">
    <property type="interactions" value="2153"/>
</dbReference>
<dbReference type="IntAct" id="Q9D0M3">
    <property type="interactions" value="16"/>
</dbReference>
<dbReference type="MINT" id="Q9D0M3"/>
<dbReference type="STRING" id="10090.ENSMUSP00000023210"/>
<dbReference type="GlyGen" id="Q9D0M3">
    <property type="glycosylation" value="2 sites, 1 O-linked glycan (1 site)"/>
</dbReference>
<dbReference type="iPTMnet" id="Q9D0M3"/>
<dbReference type="PhosphoSitePlus" id="Q9D0M3"/>
<dbReference type="SwissPalm" id="Q9D0M3"/>
<dbReference type="jPOST" id="Q9D0M3"/>
<dbReference type="PaxDb" id="10090-ENSMUSP00000023210"/>
<dbReference type="PeptideAtlas" id="Q9D0M3"/>
<dbReference type="ProteomicsDB" id="283990">
    <molecule id="Q9D0M3-1"/>
</dbReference>
<dbReference type="ProteomicsDB" id="283991">
    <molecule id="Q9D0M3-2"/>
</dbReference>
<dbReference type="Pumba" id="Q9D0M3"/>
<dbReference type="TopDownProteomics" id="Q9D0M3-1">
    <molecule id="Q9D0M3-1"/>
</dbReference>
<dbReference type="Antibodypedia" id="810">
    <property type="antibodies" value="390 antibodies from 33 providers"/>
</dbReference>
<dbReference type="DNASU" id="66445"/>
<dbReference type="Ensembl" id="ENSMUST00000023210.8">
    <molecule id="Q9D0M3-1"/>
    <property type="protein sequence ID" value="ENSMUSP00000023210.7"/>
    <property type="gene ID" value="ENSMUSG00000022551.9"/>
</dbReference>
<dbReference type="GeneID" id="66445"/>
<dbReference type="KEGG" id="mmu:66445"/>
<dbReference type="UCSC" id="uc007wjs.1">
    <molecule id="Q9D0M3-1"/>
    <property type="organism name" value="mouse"/>
</dbReference>
<dbReference type="AGR" id="MGI:1913695"/>
<dbReference type="CTD" id="1537"/>
<dbReference type="MGI" id="MGI:1913695">
    <property type="gene designation" value="Cyc1"/>
</dbReference>
<dbReference type="VEuPathDB" id="HostDB:ENSMUSG00000022551"/>
<dbReference type="eggNOG" id="KOG3052">
    <property type="taxonomic scope" value="Eukaryota"/>
</dbReference>
<dbReference type="GeneTree" id="ENSGT00390000012445"/>
<dbReference type="HOGENOM" id="CLU_040334_1_0_1"/>
<dbReference type="InParanoid" id="Q9D0M3"/>
<dbReference type="OMA" id="WVKKFKW"/>
<dbReference type="OrthoDB" id="5925at2759"/>
<dbReference type="PhylomeDB" id="Q9D0M3"/>
<dbReference type="TreeFam" id="TF314799"/>
<dbReference type="Reactome" id="R-MMU-611105">
    <property type="pathway name" value="Respiratory electron transport"/>
</dbReference>
<dbReference type="Reactome" id="R-MMU-9865881">
    <property type="pathway name" value="Complex III assembly"/>
</dbReference>
<dbReference type="BioGRID-ORCS" id="66445">
    <property type="hits" value="28 hits in 83 CRISPR screens"/>
</dbReference>
<dbReference type="CD-CODE" id="CE726F99">
    <property type="entry name" value="Postsynaptic density"/>
</dbReference>
<dbReference type="ChiTaRS" id="Cyc1">
    <property type="organism name" value="mouse"/>
</dbReference>
<dbReference type="PRO" id="PR:Q9D0M3"/>
<dbReference type="Proteomes" id="UP000000589">
    <property type="component" value="Chromosome 15"/>
</dbReference>
<dbReference type="RNAct" id="Q9D0M3">
    <property type="molecule type" value="protein"/>
</dbReference>
<dbReference type="Bgee" id="ENSMUSG00000022551">
    <property type="expression patterns" value="Expressed in ileal epithelium and 270 other cell types or tissues"/>
</dbReference>
<dbReference type="ExpressionAtlas" id="Q9D0M3">
    <property type="expression patterns" value="baseline and differential"/>
</dbReference>
<dbReference type="GO" id="GO:0005743">
    <property type="term" value="C:mitochondrial inner membrane"/>
    <property type="evidence" value="ECO:0000314"/>
    <property type="project" value="UniProtKB"/>
</dbReference>
<dbReference type="GO" id="GO:0005739">
    <property type="term" value="C:mitochondrion"/>
    <property type="evidence" value="ECO:0000314"/>
    <property type="project" value="MGI"/>
</dbReference>
<dbReference type="GO" id="GO:0045275">
    <property type="term" value="C:respiratory chain complex III"/>
    <property type="evidence" value="ECO:0000314"/>
    <property type="project" value="UniProtKB"/>
</dbReference>
<dbReference type="GO" id="GO:0020037">
    <property type="term" value="F:heme binding"/>
    <property type="evidence" value="ECO:0007669"/>
    <property type="project" value="InterPro"/>
</dbReference>
<dbReference type="GO" id="GO:0046872">
    <property type="term" value="F:metal ion binding"/>
    <property type="evidence" value="ECO:0007669"/>
    <property type="project" value="UniProtKB-KW"/>
</dbReference>
<dbReference type="GO" id="GO:0008121">
    <property type="term" value="F:ubiquinol-cytochrome-c reductase activity"/>
    <property type="evidence" value="ECO:0007669"/>
    <property type="project" value="UniProtKB-EC"/>
</dbReference>
<dbReference type="GO" id="GO:0045333">
    <property type="term" value="P:cellular respiration"/>
    <property type="evidence" value="ECO:0000303"/>
    <property type="project" value="ComplexPortal"/>
</dbReference>
<dbReference type="GO" id="GO:0006122">
    <property type="term" value="P:mitochondrial electron transport, ubiquinol to cytochrome c"/>
    <property type="evidence" value="ECO:0000303"/>
    <property type="project" value="ComplexPortal"/>
</dbReference>
<dbReference type="GO" id="GO:0033762">
    <property type="term" value="P:response to glucagon"/>
    <property type="evidence" value="ECO:0007669"/>
    <property type="project" value="Ensembl"/>
</dbReference>
<dbReference type="FunFam" id="1.10.760.10:FF:000002">
    <property type="entry name" value="Cytochrome c1, heme protein"/>
    <property type="match status" value="1"/>
</dbReference>
<dbReference type="FunFam" id="1.20.5.100:FF:000003">
    <property type="entry name" value="Cytochrome c1, heme protein, mitochondrial"/>
    <property type="match status" value="1"/>
</dbReference>
<dbReference type="Gene3D" id="1.10.760.10">
    <property type="entry name" value="Cytochrome c-like domain"/>
    <property type="match status" value="1"/>
</dbReference>
<dbReference type="Gene3D" id="1.20.5.100">
    <property type="entry name" value="Cytochrome c1, transmembrane anchor, C-terminal"/>
    <property type="match status" value="1"/>
</dbReference>
<dbReference type="InterPro" id="IPR009056">
    <property type="entry name" value="Cyt_c-like_dom"/>
</dbReference>
<dbReference type="InterPro" id="IPR036909">
    <property type="entry name" value="Cyt_c-like_dom_sf"/>
</dbReference>
<dbReference type="InterPro" id="IPR002326">
    <property type="entry name" value="Cyt_c1"/>
</dbReference>
<dbReference type="InterPro" id="IPR021157">
    <property type="entry name" value="Cyt_c1_TM_anchor_C"/>
</dbReference>
<dbReference type="PANTHER" id="PTHR10266">
    <property type="entry name" value="CYTOCHROME C1"/>
    <property type="match status" value="1"/>
</dbReference>
<dbReference type="PANTHER" id="PTHR10266:SF3">
    <property type="entry name" value="CYTOCHROME C1, HEME PROTEIN, MITOCHONDRIAL"/>
    <property type="match status" value="1"/>
</dbReference>
<dbReference type="Pfam" id="PF02167">
    <property type="entry name" value="Cytochrom_C1"/>
    <property type="match status" value="1"/>
</dbReference>
<dbReference type="PRINTS" id="PR00603">
    <property type="entry name" value="CYTOCHROMEC1"/>
</dbReference>
<dbReference type="SUPFAM" id="SSF46626">
    <property type="entry name" value="Cytochrome c"/>
    <property type="match status" value="1"/>
</dbReference>
<dbReference type="SUPFAM" id="SSF81496">
    <property type="entry name" value="Cytochrome c1 subunit of cytochrome bc1 complex (Ubiquinol-cytochrome c reductase), transmembrane anchor"/>
    <property type="match status" value="1"/>
</dbReference>
<dbReference type="PROSITE" id="PS51007">
    <property type="entry name" value="CYTC"/>
    <property type="match status" value="1"/>
</dbReference>
<protein>
    <recommendedName>
        <fullName>Cytochrome c1, heme protein, mitochondrial</fullName>
        <ecNumber>7.1.1.8</ecNumber>
    </recommendedName>
    <alternativeName>
        <fullName>Complex III subunit 4</fullName>
    </alternativeName>
    <alternativeName>
        <fullName>Complex III subunit IV</fullName>
    </alternativeName>
    <alternativeName>
        <fullName>Cytochrome b-c1 complex subunit 4</fullName>
    </alternativeName>
    <alternativeName>
        <fullName>Ubiquinol-cytochrome-c reductase complex cytochrome c1 subunit</fullName>
        <shortName>Cytochrome c-1</shortName>
    </alternativeName>
</protein>
<proteinExistence type="evidence at protein level"/>
<gene>
    <name type="primary">Cyc1</name>
</gene>
<reference key="1">
    <citation type="journal article" date="2005" name="Science">
        <title>The transcriptional landscape of the mammalian genome.</title>
        <authorList>
            <person name="Carninci P."/>
            <person name="Kasukawa T."/>
            <person name="Katayama S."/>
            <person name="Gough J."/>
            <person name="Frith M.C."/>
            <person name="Maeda N."/>
            <person name="Oyama R."/>
            <person name="Ravasi T."/>
            <person name="Lenhard B."/>
            <person name="Wells C."/>
            <person name="Kodzius R."/>
            <person name="Shimokawa K."/>
            <person name="Bajic V.B."/>
            <person name="Brenner S.E."/>
            <person name="Batalov S."/>
            <person name="Forrest A.R."/>
            <person name="Zavolan M."/>
            <person name="Davis M.J."/>
            <person name="Wilming L.G."/>
            <person name="Aidinis V."/>
            <person name="Allen J.E."/>
            <person name="Ambesi-Impiombato A."/>
            <person name="Apweiler R."/>
            <person name="Aturaliya R.N."/>
            <person name="Bailey T.L."/>
            <person name="Bansal M."/>
            <person name="Baxter L."/>
            <person name="Beisel K.W."/>
            <person name="Bersano T."/>
            <person name="Bono H."/>
            <person name="Chalk A.M."/>
            <person name="Chiu K.P."/>
            <person name="Choudhary V."/>
            <person name="Christoffels A."/>
            <person name="Clutterbuck D.R."/>
            <person name="Crowe M.L."/>
            <person name="Dalla E."/>
            <person name="Dalrymple B.P."/>
            <person name="de Bono B."/>
            <person name="Della Gatta G."/>
            <person name="di Bernardo D."/>
            <person name="Down T."/>
            <person name="Engstrom P."/>
            <person name="Fagiolini M."/>
            <person name="Faulkner G."/>
            <person name="Fletcher C.F."/>
            <person name="Fukushima T."/>
            <person name="Furuno M."/>
            <person name="Futaki S."/>
            <person name="Gariboldi M."/>
            <person name="Georgii-Hemming P."/>
            <person name="Gingeras T.R."/>
            <person name="Gojobori T."/>
            <person name="Green R.E."/>
            <person name="Gustincich S."/>
            <person name="Harbers M."/>
            <person name="Hayashi Y."/>
            <person name="Hensch T.K."/>
            <person name="Hirokawa N."/>
            <person name="Hill D."/>
            <person name="Huminiecki L."/>
            <person name="Iacono M."/>
            <person name="Ikeo K."/>
            <person name="Iwama A."/>
            <person name="Ishikawa T."/>
            <person name="Jakt M."/>
            <person name="Kanapin A."/>
            <person name="Katoh M."/>
            <person name="Kawasawa Y."/>
            <person name="Kelso J."/>
            <person name="Kitamura H."/>
            <person name="Kitano H."/>
            <person name="Kollias G."/>
            <person name="Krishnan S.P."/>
            <person name="Kruger A."/>
            <person name="Kummerfeld S.K."/>
            <person name="Kurochkin I.V."/>
            <person name="Lareau L.F."/>
            <person name="Lazarevic D."/>
            <person name="Lipovich L."/>
            <person name="Liu J."/>
            <person name="Liuni S."/>
            <person name="McWilliam S."/>
            <person name="Madan Babu M."/>
            <person name="Madera M."/>
            <person name="Marchionni L."/>
            <person name="Matsuda H."/>
            <person name="Matsuzawa S."/>
            <person name="Miki H."/>
            <person name="Mignone F."/>
            <person name="Miyake S."/>
            <person name="Morris K."/>
            <person name="Mottagui-Tabar S."/>
            <person name="Mulder N."/>
            <person name="Nakano N."/>
            <person name="Nakauchi H."/>
            <person name="Ng P."/>
            <person name="Nilsson R."/>
            <person name="Nishiguchi S."/>
            <person name="Nishikawa S."/>
            <person name="Nori F."/>
            <person name="Ohara O."/>
            <person name="Okazaki Y."/>
            <person name="Orlando V."/>
            <person name="Pang K.C."/>
            <person name="Pavan W.J."/>
            <person name="Pavesi G."/>
            <person name="Pesole G."/>
            <person name="Petrovsky N."/>
            <person name="Piazza S."/>
            <person name="Reed J."/>
            <person name="Reid J.F."/>
            <person name="Ring B.Z."/>
            <person name="Ringwald M."/>
            <person name="Rost B."/>
            <person name="Ruan Y."/>
            <person name="Salzberg S.L."/>
            <person name="Sandelin A."/>
            <person name="Schneider C."/>
            <person name="Schoenbach C."/>
            <person name="Sekiguchi K."/>
            <person name="Semple C.A."/>
            <person name="Seno S."/>
            <person name="Sessa L."/>
            <person name="Sheng Y."/>
            <person name="Shibata Y."/>
            <person name="Shimada H."/>
            <person name="Shimada K."/>
            <person name="Silva D."/>
            <person name="Sinclair B."/>
            <person name="Sperling S."/>
            <person name="Stupka E."/>
            <person name="Sugiura K."/>
            <person name="Sultana R."/>
            <person name="Takenaka Y."/>
            <person name="Taki K."/>
            <person name="Tammoja K."/>
            <person name="Tan S.L."/>
            <person name="Tang S."/>
            <person name="Taylor M.S."/>
            <person name="Tegner J."/>
            <person name="Teichmann S.A."/>
            <person name="Ueda H.R."/>
            <person name="van Nimwegen E."/>
            <person name="Verardo R."/>
            <person name="Wei C.L."/>
            <person name="Yagi K."/>
            <person name="Yamanishi H."/>
            <person name="Zabarovsky E."/>
            <person name="Zhu S."/>
            <person name="Zimmer A."/>
            <person name="Hide W."/>
            <person name="Bult C."/>
            <person name="Grimmond S.M."/>
            <person name="Teasdale R.D."/>
            <person name="Liu E.T."/>
            <person name="Brusic V."/>
            <person name="Quackenbush J."/>
            <person name="Wahlestedt C."/>
            <person name="Mattick J.S."/>
            <person name="Hume D.A."/>
            <person name="Kai C."/>
            <person name="Sasaki D."/>
            <person name="Tomaru Y."/>
            <person name="Fukuda S."/>
            <person name="Kanamori-Katayama M."/>
            <person name="Suzuki M."/>
            <person name="Aoki J."/>
            <person name="Arakawa T."/>
            <person name="Iida J."/>
            <person name="Imamura K."/>
            <person name="Itoh M."/>
            <person name="Kato T."/>
            <person name="Kawaji H."/>
            <person name="Kawagashira N."/>
            <person name="Kawashima T."/>
            <person name="Kojima M."/>
            <person name="Kondo S."/>
            <person name="Konno H."/>
            <person name="Nakano K."/>
            <person name="Ninomiya N."/>
            <person name="Nishio T."/>
            <person name="Okada M."/>
            <person name="Plessy C."/>
            <person name="Shibata K."/>
            <person name="Shiraki T."/>
            <person name="Suzuki S."/>
            <person name="Tagami M."/>
            <person name="Waki K."/>
            <person name="Watahiki A."/>
            <person name="Okamura-Oho Y."/>
            <person name="Suzuki H."/>
            <person name="Kawai J."/>
            <person name="Hayashizaki Y."/>
        </authorList>
    </citation>
    <scope>NUCLEOTIDE SEQUENCE [LARGE SCALE MRNA] (ISOFORMS 1 AND 2)</scope>
    <source>
        <strain>C57BL/6J</strain>
        <strain>NOD</strain>
        <tissue>Bone marrow</tissue>
        <tissue>Embryo</tissue>
        <tissue>Kidney</tissue>
    </source>
</reference>
<reference key="2">
    <citation type="journal article" date="2004" name="Genome Res.">
        <title>The status, quality, and expansion of the NIH full-length cDNA project: the Mammalian Gene Collection (MGC).</title>
        <authorList>
            <consortium name="The MGC Project Team"/>
        </authorList>
    </citation>
    <scope>NUCLEOTIDE SEQUENCE [LARGE SCALE MRNA] (ISOFORMS 1 AND 2)</scope>
    <source>
        <tissue>Jaw</tissue>
    </source>
</reference>
<reference key="3">
    <citation type="submission" date="2007-04" db="UniProtKB">
        <authorList>
            <person name="Lubec G."/>
            <person name="Klug S."/>
            <person name="Kang S.U."/>
        </authorList>
    </citation>
    <scope>PROTEIN SEQUENCE OF 100-111; 134-202; 269-285 AND 292-307</scope>
    <scope>IDENTIFICATION BY MASS SPECTROMETRY</scope>
    <source>
        <strain>C57BL/6J</strain>
        <tissue>Brain</tissue>
        <tissue>Hippocampus</tissue>
    </source>
</reference>
<reference key="4">
    <citation type="journal article" date="2008" name="Mol. Cell">
        <title>Respiratory active mitochondrial supercomplexes.</title>
        <authorList>
            <person name="Acin-Perez R."/>
            <person name="Fernandez-Silva P."/>
            <person name="Peleato M.L."/>
            <person name="Perez-Martos A."/>
            <person name="Enriquez J.A."/>
        </authorList>
    </citation>
    <scope>SUBUNIT</scope>
</reference>
<reference key="5">
    <citation type="journal article" date="2010" name="Cell">
        <title>A tissue-specific atlas of mouse protein phosphorylation and expression.</title>
        <authorList>
            <person name="Huttlin E.L."/>
            <person name="Jedrychowski M.P."/>
            <person name="Elias J.E."/>
            <person name="Goswami T."/>
            <person name="Rad R."/>
            <person name="Beausoleil S.A."/>
            <person name="Villen J."/>
            <person name="Haas W."/>
            <person name="Sowa M.E."/>
            <person name="Gygi S.P."/>
        </authorList>
    </citation>
    <scope>IDENTIFICATION BY MASS SPECTROMETRY [LARGE SCALE ANALYSIS]</scope>
    <source>
        <tissue>Brain</tissue>
        <tissue>Brown adipose tissue</tissue>
        <tissue>Heart</tissue>
        <tissue>Kidney</tissue>
        <tissue>Liver</tissue>
        <tissue>Lung</tissue>
        <tissue>Pancreas</tissue>
        <tissue>Spleen</tissue>
        <tissue>Testis</tissue>
    </source>
</reference>
<reference key="6">
    <citation type="journal article" date="2020" name="Nat. Commun.">
        <title>MFSD7C switches mitochondrial ATP synthesis to thermogenesis in response to heme.</title>
        <authorList>
            <person name="Li Y."/>
            <person name="Ivica N.A."/>
            <person name="Dong T."/>
            <person name="Papageorgiou D.P."/>
            <person name="He Y."/>
            <person name="Brown D.R."/>
            <person name="Kleyman M."/>
            <person name="Hu G."/>
            <person name="Chen W.W."/>
            <person name="Sullivan L.B."/>
            <person name="Del Rosario A."/>
            <person name="Hammond P.T."/>
            <person name="Vander Heiden M.G."/>
            <person name="Chen J."/>
        </authorList>
    </citation>
    <scope>INTERACTION WITH FLVCR2</scope>
</reference>
<reference evidence="11 12 13" key="7">
    <citation type="journal article" date="2021" name="Nature">
        <title>Structure and assembly of the mammalian mitochondrial supercomplex CIII2CIV.</title>
        <authorList>
            <person name="Vercellino I."/>
            <person name="Sazanov L.A."/>
        </authorList>
    </citation>
    <scope>STRUCTURE BY ELECTRON MICROSCOPY (3.20 ANGSTROMS) IN COMPLEX WITH MITOCHONDRIAL RESPIRATORY SUPERCOMPLEX</scope>
    <scope>FUNCTION</scope>
    <scope>COFACTOR</scope>
    <scope>SUBCELLULAR LOCATION</scope>
    <scope>SUBUNIT</scope>
</reference>
<reference evidence="14" key="8">
    <citation type="journal article" date="2024" name="Nat. Struct. Mol. Biol.">
        <title>SCAF1 drives the compositional diversity of mammalian respirasomes.</title>
        <authorList>
            <person name="Vercellino I."/>
            <person name="Sazanov L.A."/>
        </authorList>
    </citation>
    <scope>STRUCTURE BY ELECTRON MICROSCOPY (3.60 ANGSTROMS) IN COMPLEX WITH MITOCHONDRIAL RESPIRATORY SUPERCOMPLEX</scope>
    <scope>FUNCTION</scope>
    <scope>SUBCELLULAR LOCATION</scope>
    <scope>SUBUNIT</scope>
</reference>
<keyword id="KW-0002">3D-structure</keyword>
<keyword id="KW-0025">Alternative splicing</keyword>
<keyword id="KW-0903">Direct protein sequencing</keyword>
<keyword id="KW-0249">Electron transport</keyword>
<keyword id="KW-0349">Heme</keyword>
<keyword id="KW-0408">Iron</keyword>
<keyword id="KW-0472">Membrane</keyword>
<keyword id="KW-0479">Metal-binding</keyword>
<keyword id="KW-0496">Mitochondrion</keyword>
<keyword id="KW-0999">Mitochondrion inner membrane</keyword>
<keyword id="KW-1185">Reference proteome</keyword>
<keyword id="KW-0679">Respiratory chain</keyword>
<keyword id="KW-0809">Transit peptide</keyword>
<keyword id="KW-1278">Translocase</keyword>
<keyword id="KW-0812">Transmembrane</keyword>
<keyword id="KW-1133">Transmembrane helix</keyword>
<keyword id="KW-0813">Transport</keyword>
<evidence type="ECO:0000250" key="1"/>
<evidence type="ECO:0000250" key="2">
    <source>
        <dbReference type="UniProtKB" id="P07143"/>
    </source>
</evidence>
<evidence type="ECO:0000255" key="3">
    <source>
        <dbReference type="PROSITE-ProRule" id="PRU00433"/>
    </source>
</evidence>
<evidence type="ECO:0000269" key="4">
    <source>
    </source>
</evidence>
<evidence type="ECO:0000269" key="5">
    <source>
    </source>
</evidence>
<evidence type="ECO:0000269" key="6">
    <source>
    </source>
</evidence>
<evidence type="ECO:0000269" key="7">
    <source>
    </source>
</evidence>
<evidence type="ECO:0000303" key="8">
    <source>
    </source>
</evidence>
<evidence type="ECO:0000303" key="9">
    <source>
    </source>
</evidence>
<evidence type="ECO:0000305" key="10"/>
<evidence type="ECO:0000312" key="11">
    <source>
        <dbReference type="PDB" id="7O3E"/>
    </source>
</evidence>
<evidence type="ECO:0007744" key="12">
    <source>
        <dbReference type="PDB" id="7O37"/>
    </source>
</evidence>
<evidence type="ECO:0007744" key="13">
    <source>
        <dbReference type="PDB" id="7O3C"/>
    </source>
</evidence>
<evidence type="ECO:0007744" key="14">
    <source>
        <dbReference type="PDB" id="8PW5"/>
    </source>
</evidence>
<evidence type="ECO:0007829" key="15">
    <source>
        <dbReference type="PDB" id="7O3H"/>
    </source>
</evidence>
<feature type="transit peptide" description="Mitochondrion" evidence="1">
    <location>
        <begin position="1"/>
        <end position="84"/>
    </location>
</feature>
<feature type="chain" id="PRO_0000006555" description="Cytochrome c1, heme protein, mitochondrial">
    <location>
        <begin position="85"/>
        <end position="325"/>
    </location>
</feature>
<feature type="topological domain" description="Mitochondrial intermembrane" evidence="6 12 13">
    <location>
        <begin position="85"/>
        <end position="287"/>
    </location>
</feature>
<feature type="transmembrane region" description="Helical" evidence="6 12 13">
    <location>
        <begin position="288"/>
        <end position="308"/>
    </location>
</feature>
<feature type="topological domain" description="Mitochondrial matrix" evidence="6 12 13">
    <location>
        <begin position="309"/>
        <end position="325"/>
    </location>
</feature>
<feature type="domain" description="Cytochrome c" evidence="3">
    <location>
        <begin position="108"/>
        <end position="209"/>
    </location>
</feature>
<feature type="binding site" description="covalent" evidence="6 12 13">
    <location>
        <position position="121"/>
    </location>
    <ligand>
        <name>heme c</name>
        <dbReference type="ChEBI" id="CHEBI:61717"/>
    </ligand>
</feature>
<feature type="binding site" description="covalent" evidence="6 12 13">
    <location>
        <position position="124"/>
    </location>
    <ligand>
        <name>heme c</name>
        <dbReference type="ChEBI" id="CHEBI:61717"/>
    </ligand>
</feature>
<feature type="binding site" description="axial binding residue" evidence="6 12 13">
    <location>
        <position position="125"/>
    </location>
    <ligand>
        <name>heme c</name>
        <dbReference type="ChEBI" id="CHEBI:61717"/>
    </ligand>
    <ligandPart>
        <name>Fe</name>
        <dbReference type="ChEBI" id="CHEBI:18248"/>
    </ligandPart>
</feature>
<feature type="binding site" description="axial binding residue" evidence="6 12 13">
    <location>
        <position position="244"/>
    </location>
    <ligand>
        <name>heme c</name>
        <dbReference type="ChEBI" id="CHEBI:61717"/>
    </ligand>
    <ligandPart>
        <name>Fe</name>
        <dbReference type="ChEBI" id="CHEBI:18248"/>
    </ligandPart>
</feature>
<feature type="splice variant" id="VSP_025056" description="In isoform 2." evidence="8 9">
    <location>
        <begin position="1"/>
        <end position="59"/>
    </location>
</feature>
<feature type="sequence conflict" description="In Ref. 1; BAB22380." evidence="10" ref="1">
    <original>A</original>
    <variation>R</variation>
    <location>
        <position position="44"/>
    </location>
</feature>
<feature type="sequence conflict" description="In Ref. 1; BAB22380." evidence="10" ref="1">
    <original>K</original>
    <variation>R</variation>
    <location>
        <position position="318"/>
    </location>
</feature>
<feature type="strand" evidence="15">
    <location>
        <begin position="100"/>
        <end position="102"/>
    </location>
</feature>
<feature type="helix" evidence="15">
    <location>
        <begin position="107"/>
        <end position="119"/>
    </location>
</feature>
<feature type="helix" evidence="15">
    <location>
        <begin position="121"/>
        <end position="123"/>
    </location>
</feature>
<feature type="helix" evidence="15">
    <location>
        <begin position="132"/>
        <end position="135"/>
    </location>
</feature>
<feature type="turn" evidence="15">
    <location>
        <begin position="137"/>
        <end position="139"/>
    </location>
</feature>
<feature type="helix" evidence="15">
    <location>
        <begin position="142"/>
        <end position="150"/>
    </location>
</feature>
<feature type="strand" evidence="15">
    <location>
        <begin position="152"/>
        <end position="156"/>
    </location>
</feature>
<feature type="strand" evidence="15">
    <location>
        <begin position="165"/>
        <end position="168"/>
    </location>
</feature>
<feature type="strand" evidence="15">
    <location>
        <begin position="178"/>
        <end position="181"/>
    </location>
</feature>
<feature type="helix" evidence="15">
    <location>
        <begin position="182"/>
        <end position="188"/>
    </location>
</feature>
<feature type="turn" evidence="15">
    <location>
        <begin position="189"/>
        <end position="191"/>
    </location>
</feature>
<feature type="turn" evidence="15">
    <location>
        <begin position="200"/>
        <end position="202"/>
    </location>
</feature>
<feature type="turn" evidence="15">
    <location>
        <begin position="205"/>
        <end position="207"/>
    </location>
</feature>
<feature type="helix" evidence="15">
    <location>
        <begin position="208"/>
        <end position="215"/>
    </location>
</feature>
<feature type="strand" evidence="15">
    <location>
        <begin position="240"/>
        <end position="244"/>
    </location>
</feature>
<feature type="helix" evidence="15">
    <location>
        <begin position="263"/>
        <end position="278"/>
    </location>
</feature>
<feature type="helix" evidence="15">
    <location>
        <begin position="282"/>
        <end position="312"/>
    </location>
</feature>
<feature type="turn" evidence="15">
    <location>
        <begin position="313"/>
        <end position="316"/>
    </location>
</feature>
<feature type="strand" evidence="15">
    <location>
        <begin position="318"/>
        <end position="321"/>
    </location>
</feature>
<sequence length="325" mass="35328">MAAAAASLRRTVLGPRGVGLPGASAPGLLGGARSRQLPLRTPQAVSLSSKSGPSRGRKVMLSALGMLAAGGAGLAVALHSAVSASDLELHPPSYPWSHRGLLSSLDHTSIRRGFQVYKQVCSSCHSMDYVAYRHLVGVCYTEEEAKALAEEVEVQDGPNDDGEMFMRPGKLSDYFPKPYPNPEAARAANNGALPPDLSYIVRARHGGEDYVFSLLTGYCEPPTGVSLREGLYFNPYFPGQAIGMAPPIYTEVLEYDDGTPATMSQVAKDVATFLRWASEPEHDHRKRMGLKMLLMMGLLLPLTYAMKRHKWSVLKSRKLAYRPPK</sequence>
<comment type="function">
    <text evidence="6 7">Component of the ubiquinol-cytochrome c oxidoreductase, a multisubunit transmembrane complex that is part of the mitochondrial electron transport chain which drives oxidative phosphorylation. The respiratory chain contains 3 multisubunit complexes succinate dehydrogenase (complex II, CII), ubiquinol-cytochrome c oxidoreductase (cytochrome b-c1 complex, complex III, CIII) and cytochrome c oxidase (complex IV, CIV), that cooperate to transfer electrons derived from NADH and succinate to molecular oxygen, creating an electrochemical gradient over the inner membrane that drives transmembrane transport and the ATP synthase. The cytochrome b-c1 complex catalyzes electron transfer from ubiquinol to cytochrome c, linking this redox reaction to translocation of protons across the mitochondrial inner membrane, with protons being carried across the membrane as hydrogens on the quinol. In the process called Q cycle, 2 protons are consumed from the matrix, 4 protons are released into the intermembrane space and 2 electrons are passed to cytochrome c. Cytochrome c1 is a catalytic core subunit containing a c-type heme. It transfers electrons from the [2Fe-2S] iron-sulfur cluster of the Rieske protein to cytochrome c.</text>
</comment>
<comment type="catalytic activity">
    <reaction evidence="2">
        <text>a quinol + 2 Fe(III)-[cytochrome c](out) = a quinone + 2 Fe(II)-[cytochrome c](out) + 2 H(+)(out)</text>
        <dbReference type="Rhea" id="RHEA:11484"/>
        <dbReference type="Rhea" id="RHEA-COMP:10350"/>
        <dbReference type="Rhea" id="RHEA-COMP:14399"/>
        <dbReference type="ChEBI" id="CHEBI:15378"/>
        <dbReference type="ChEBI" id="CHEBI:24646"/>
        <dbReference type="ChEBI" id="CHEBI:29033"/>
        <dbReference type="ChEBI" id="CHEBI:29034"/>
        <dbReference type="ChEBI" id="CHEBI:132124"/>
        <dbReference type="EC" id="7.1.1.8"/>
    </reaction>
</comment>
<comment type="cofactor">
    <cofactor evidence="6">
        <name>heme c</name>
        <dbReference type="ChEBI" id="CHEBI:61717"/>
    </cofactor>
    <text evidence="6">Binds 1 heme c group covalently per subunit.</text>
</comment>
<comment type="subunit">
    <text evidence="4 5 6 7">Component of the ubiquinol-cytochrome c oxidoreductase (cytochrome b-c1 complex, complex III, CIII), a multisubunit enzyme composed of 11 subunits (PubMed:34616041, PubMed:38575788). The complex is composed of 3 respiratory subunits cytochrome b, cytochrome c1 and Rieske protein UQCRFS1, 2 core protein subunits UQCRC1/QCR1 and UQCRC2/QCR2, and 6 low-molecular weight protein subunits UQCRH/QCR6, UQCRB/QCR7, UQCRQ/QCR8, UQCR10/QCR9, UQCR11/QCR10 and subunit 9, the cleavage product of Rieske protein UQCRFS1 (PubMed:34616041, PubMed:38575788). The complex exists as an obligatory dimer and forms supercomplexes (SCs) in the inner mitochondrial membrane with NADH-ubiquinone oxidoreductase (complex I, CI) and cytochrome c oxidase (complex IV, CIV), resulting in different assemblies (supercomplex SCI(1)III(2)IV(1) and megacomplex MCI(2)III(2)IV(2)) (PubMed:19026783, PubMed:34616041, PubMed:38575788). Interacts with FLVCR2; this interaction occurs in the absence of heme and is disrupted upon heme binding (PubMed:32973183).</text>
</comment>
<comment type="subcellular location">
    <subcellularLocation>
        <location evidence="6 7">Mitochondrion inner membrane</location>
        <topology evidence="6">Single-pass membrane protein</topology>
    </subcellularLocation>
</comment>
<comment type="alternative products">
    <event type="alternative splicing"/>
    <isoform>
        <id>Q9D0M3-1</id>
        <name>1</name>
        <sequence type="displayed"/>
    </isoform>
    <isoform>
        <id>Q9D0M3-2</id>
        <name>2</name>
        <sequence type="described" ref="VSP_025056"/>
    </isoform>
</comment>
<comment type="similarity">
    <text evidence="10">Belongs to the cytochrome c family.</text>
</comment>
<comment type="sequence caution" evidence="10">
    <conflict type="erroneous initiation">
        <sequence resource="EMBL-CDS" id="AAH82790"/>
    </conflict>
</comment>
<accession>Q9D0M3</accession>
<accession>Q3TDC5</accession>
<accession>Q3UAN2</accession>
<accession>Q63ZW4</accession>
<accession>Q9DCG0</accession>
<organism>
    <name type="scientific">Mus musculus</name>
    <name type="common">Mouse</name>
    <dbReference type="NCBI Taxonomy" id="10090"/>
    <lineage>
        <taxon>Eukaryota</taxon>
        <taxon>Metazoa</taxon>
        <taxon>Chordata</taxon>
        <taxon>Craniata</taxon>
        <taxon>Vertebrata</taxon>
        <taxon>Euteleostomi</taxon>
        <taxon>Mammalia</taxon>
        <taxon>Eutheria</taxon>
        <taxon>Euarchontoglires</taxon>
        <taxon>Glires</taxon>
        <taxon>Rodentia</taxon>
        <taxon>Myomorpha</taxon>
        <taxon>Muroidea</taxon>
        <taxon>Muridae</taxon>
        <taxon>Murinae</taxon>
        <taxon>Mus</taxon>
        <taxon>Mus</taxon>
    </lineage>
</organism>
<name>CY1_MOUSE</name>